<proteinExistence type="inferred from homology"/>
<sequence length="88" mass="9769">MLDTKFHELLDFPAAFPFKVVGDARDTLADDVVAVVQRHVPGDYMPTSRASSKGSYHSITVKVTVHSKEQIELLYIELAAIEGVKRVL</sequence>
<dbReference type="EMBL" id="CP000606">
    <property type="protein sequence ID" value="ABO24806.1"/>
    <property type="molecule type" value="Genomic_DNA"/>
</dbReference>
<dbReference type="SMR" id="A3QH58"/>
<dbReference type="STRING" id="323850.Shew_2940"/>
<dbReference type="KEGG" id="slo:Shew_2940"/>
<dbReference type="eggNOG" id="COG2921">
    <property type="taxonomic scope" value="Bacteria"/>
</dbReference>
<dbReference type="HOGENOM" id="CLU_161438_2_1_6"/>
<dbReference type="OrthoDB" id="9793424at2"/>
<dbReference type="Proteomes" id="UP000001558">
    <property type="component" value="Chromosome"/>
</dbReference>
<dbReference type="GO" id="GO:0005829">
    <property type="term" value="C:cytosol"/>
    <property type="evidence" value="ECO:0007669"/>
    <property type="project" value="TreeGrafter"/>
</dbReference>
<dbReference type="Gene3D" id="3.30.70.260">
    <property type="match status" value="1"/>
</dbReference>
<dbReference type="HAMAP" id="MF_00659">
    <property type="entry name" value="UPF0250"/>
    <property type="match status" value="1"/>
</dbReference>
<dbReference type="InterPro" id="IPR007454">
    <property type="entry name" value="UPF0250_YbeD-like"/>
</dbReference>
<dbReference type="InterPro" id="IPR027471">
    <property type="entry name" value="YbeD-like_sf"/>
</dbReference>
<dbReference type="NCBIfam" id="NF003447">
    <property type="entry name" value="PRK04998.1"/>
    <property type="match status" value="1"/>
</dbReference>
<dbReference type="PANTHER" id="PTHR38036">
    <property type="entry name" value="UPF0250 PROTEIN YBED"/>
    <property type="match status" value="1"/>
</dbReference>
<dbReference type="PANTHER" id="PTHR38036:SF1">
    <property type="entry name" value="UPF0250 PROTEIN YBED"/>
    <property type="match status" value="1"/>
</dbReference>
<dbReference type="Pfam" id="PF04359">
    <property type="entry name" value="DUF493"/>
    <property type="match status" value="1"/>
</dbReference>
<dbReference type="SUPFAM" id="SSF117991">
    <property type="entry name" value="YbeD/HP0495-like"/>
    <property type="match status" value="1"/>
</dbReference>
<comment type="similarity">
    <text evidence="1">Belongs to the UPF0250 family.</text>
</comment>
<gene>
    <name type="ordered locus">Shew_2940</name>
</gene>
<evidence type="ECO:0000255" key="1">
    <source>
        <dbReference type="HAMAP-Rule" id="MF_00659"/>
    </source>
</evidence>
<protein>
    <recommendedName>
        <fullName evidence="1">UPF0250 protein Shew_2940</fullName>
    </recommendedName>
</protein>
<keyword id="KW-1185">Reference proteome</keyword>
<feature type="chain" id="PRO_1000061893" description="UPF0250 protein Shew_2940">
    <location>
        <begin position="1"/>
        <end position="88"/>
    </location>
</feature>
<name>Y2940_SHELP</name>
<organism>
    <name type="scientific">Shewanella loihica (strain ATCC BAA-1088 / PV-4)</name>
    <dbReference type="NCBI Taxonomy" id="323850"/>
    <lineage>
        <taxon>Bacteria</taxon>
        <taxon>Pseudomonadati</taxon>
        <taxon>Pseudomonadota</taxon>
        <taxon>Gammaproteobacteria</taxon>
        <taxon>Alteromonadales</taxon>
        <taxon>Shewanellaceae</taxon>
        <taxon>Shewanella</taxon>
    </lineage>
</organism>
<accession>A3QH58</accession>
<reference key="1">
    <citation type="submission" date="2007-03" db="EMBL/GenBank/DDBJ databases">
        <title>Complete sequence of Shewanella loihica PV-4.</title>
        <authorList>
            <consortium name="US DOE Joint Genome Institute"/>
            <person name="Copeland A."/>
            <person name="Lucas S."/>
            <person name="Lapidus A."/>
            <person name="Barry K."/>
            <person name="Detter J.C."/>
            <person name="Glavina del Rio T."/>
            <person name="Hammon N."/>
            <person name="Israni S."/>
            <person name="Dalin E."/>
            <person name="Tice H."/>
            <person name="Pitluck S."/>
            <person name="Chain P."/>
            <person name="Malfatti S."/>
            <person name="Shin M."/>
            <person name="Vergez L."/>
            <person name="Schmutz J."/>
            <person name="Larimer F."/>
            <person name="Land M."/>
            <person name="Hauser L."/>
            <person name="Kyrpides N."/>
            <person name="Mikhailova N."/>
            <person name="Romine M.F."/>
            <person name="Serres G."/>
            <person name="Fredrickson J."/>
            <person name="Tiedje J."/>
            <person name="Richardson P."/>
        </authorList>
    </citation>
    <scope>NUCLEOTIDE SEQUENCE [LARGE SCALE GENOMIC DNA]</scope>
    <source>
        <strain>ATCC BAA-1088 / PV-4</strain>
    </source>
</reference>